<dbReference type="EC" id="4.2.1.133" evidence="4 5"/>
<dbReference type="EMBL" id="JQ478434">
    <property type="protein sequence ID" value="AFU61897.1"/>
    <property type="molecule type" value="mRNA"/>
</dbReference>
<dbReference type="EMBL" id="JN133924">
    <property type="protein sequence ID" value="AET21248.1"/>
    <property type="molecule type" value="mRNA"/>
</dbReference>
<dbReference type="SMR" id="G8GJ96"/>
<dbReference type="UniPathway" id="UPA00213"/>
<dbReference type="GO" id="GO:0009507">
    <property type="term" value="C:chloroplast"/>
    <property type="evidence" value="ECO:0000314"/>
    <property type="project" value="UniProtKB"/>
</dbReference>
<dbReference type="GO" id="GO:0102161">
    <property type="term" value="F:copal-8-ol diphosphate synthase activity"/>
    <property type="evidence" value="ECO:0000314"/>
    <property type="project" value="UniProtKB"/>
</dbReference>
<dbReference type="GO" id="GO:0000287">
    <property type="term" value="F:magnesium ion binding"/>
    <property type="evidence" value="ECO:0007669"/>
    <property type="project" value="TreeGrafter"/>
</dbReference>
<dbReference type="GO" id="GO:0010333">
    <property type="term" value="F:terpene synthase activity"/>
    <property type="evidence" value="ECO:0007669"/>
    <property type="project" value="InterPro"/>
</dbReference>
<dbReference type="GO" id="GO:0016102">
    <property type="term" value="P:diterpenoid biosynthetic process"/>
    <property type="evidence" value="ECO:0000314"/>
    <property type="project" value="UniProtKB"/>
</dbReference>
<dbReference type="GO" id="GO:0009686">
    <property type="term" value="P:gibberellin biosynthetic process"/>
    <property type="evidence" value="ECO:0007669"/>
    <property type="project" value="TreeGrafter"/>
</dbReference>
<dbReference type="FunFam" id="1.50.10.130:FF:000002">
    <property type="entry name" value="Ent-copalyl diphosphate synthase, chloroplastic"/>
    <property type="match status" value="1"/>
</dbReference>
<dbReference type="Gene3D" id="1.50.10.160">
    <property type="match status" value="1"/>
</dbReference>
<dbReference type="Gene3D" id="1.10.600.10">
    <property type="entry name" value="Farnesyl Diphosphate Synthase"/>
    <property type="match status" value="1"/>
</dbReference>
<dbReference type="Gene3D" id="1.50.10.130">
    <property type="entry name" value="Terpene synthase, N-terminal domain"/>
    <property type="match status" value="1"/>
</dbReference>
<dbReference type="InterPro" id="IPR008949">
    <property type="entry name" value="Isoprenoid_synthase_dom_sf"/>
</dbReference>
<dbReference type="InterPro" id="IPR001906">
    <property type="entry name" value="Terpene_synth_N"/>
</dbReference>
<dbReference type="InterPro" id="IPR036965">
    <property type="entry name" value="Terpene_synth_N_sf"/>
</dbReference>
<dbReference type="InterPro" id="IPR050148">
    <property type="entry name" value="Terpene_synthase-like"/>
</dbReference>
<dbReference type="InterPro" id="IPR008930">
    <property type="entry name" value="Terpenoid_cyclase/PrenylTrfase"/>
</dbReference>
<dbReference type="PANTHER" id="PTHR31739:SF30">
    <property type="entry name" value="COPAL-8-OL DIPHOSPHATE HYDRATASE, CHLOROPLASTIC"/>
    <property type="match status" value="1"/>
</dbReference>
<dbReference type="PANTHER" id="PTHR31739">
    <property type="entry name" value="ENT-COPALYL DIPHOSPHATE SYNTHASE, CHLOROPLASTIC"/>
    <property type="match status" value="1"/>
</dbReference>
<dbReference type="Pfam" id="PF01397">
    <property type="entry name" value="Terpene_synth"/>
    <property type="match status" value="1"/>
</dbReference>
<dbReference type="SFLD" id="SFLDG01014">
    <property type="entry name" value="Terpene_Cyclase_Like_1_N-term"/>
    <property type="match status" value="1"/>
</dbReference>
<dbReference type="SFLD" id="SFLDG01605">
    <property type="entry name" value="Terpene_Cyclase_Like_1_N-term"/>
    <property type="match status" value="1"/>
</dbReference>
<dbReference type="SUPFAM" id="SSF48239">
    <property type="entry name" value="Terpenoid cyclases/Protein prenyltransferases"/>
    <property type="match status" value="2"/>
</dbReference>
<dbReference type="SUPFAM" id="SSF48576">
    <property type="entry name" value="Terpenoid synthases"/>
    <property type="match status" value="1"/>
</dbReference>
<organism>
    <name type="scientific">Salvia sclarea</name>
    <name type="common">Clary sage</name>
    <dbReference type="NCBI Taxonomy" id="38869"/>
    <lineage>
        <taxon>Eukaryota</taxon>
        <taxon>Viridiplantae</taxon>
        <taxon>Streptophyta</taxon>
        <taxon>Embryophyta</taxon>
        <taxon>Tracheophyta</taxon>
        <taxon>Spermatophyta</taxon>
        <taxon>Magnoliopsida</taxon>
        <taxon>eudicotyledons</taxon>
        <taxon>Gunneridae</taxon>
        <taxon>Pentapetalae</taxon>
        <taxon>asterids</taxon>
        <taxon>lamiids</taxon>
        <taxon>Lamiales</taxon>
        <taxon>Lamiaceae</taxon>
        <taxon>Nepetoideae</taxon>
        <taxon>Mentheae</taxon>
        <taxon>Salviinae</taxon>
        <taxon>Salvia</taxon>
        <taxon>Salvia incertae sedis</taxon>
    </lineage>
</organism>
<evidence type="ECO:0000250" key="1">
    <source>
        <dbReference type="UniProtKB" id="C7BKP9"/>
    </source>
</evidence>
<evidence type="ECO:0000250" key="2">
    <source>
        <dbReference type="UniProtKB" id="Q38802"/>
    </source>
</evidence>
<evidence type="ECO:0000255" key="3"/>
<evidence type="ECO:0000269" key="4">
    <source>
    </source>
</evidence>
<evidence type="ECO:0000269" key="5">
    <source>
    </source>
</evidence>
<evidence type="ECO:0000303" key="6">
    <source>
    </source>
</evidence>
<evidence type="ECO:0000303" key="7">
    <source>
    </source>
</evidence>
<evidence type="ECO:0000303" key="8">
    <source>
    </source>
</evidence>
<evidence type="ECO:0000305" key="9"/>
<evidence type="ECO:0000305" key="10">
    <source>
    </source>
</evidence>
<evidence type="ECO:0000305" key="11">
    <source>
    </source>
</evidence>
<evidence type="ECO:0000305" key="12">
    <source>
    </source>
</evidence>
<protein>
    <recommendedName>
        <fullName evidence="9">Copal-8-ol diphosphate hydratase TPSSA9, chloroplastic</fullName>
        <ecNumber evidence="4 5">4.2.1.133</ecNumber>
    </recommendedName>
    <alternativeName>
        <fullName evidence="7">13-labden-8,15-diol pyrophosphate synthase TPSSA9</fullName>
        <shortName evidence="7">SsLPS</shortName>
    </alternativeName>
    <alternativeName>
        <fullName evidence="7">Diterpene synthase Sa9</fullName>
        <shortName evidence="7">SsTpsSa9</shortName>
    </alternativeName>
    <alternativeName>
        <fullName evidence="6">Labd-13-en-8-ol diphosphate synthase</fullName>
        <shortName evidence="6">SsLPPS</shortName>
    </alternativeName>
</protein>
<comment type="function">
    <text evidence="4 5 10 11 12">Involved in the biosynthesis of labdane-type diterpenoid including sclareol, a diterpene-diol that is used as fragrance and flavoring, and has anticancer effects (able to kill leukemic and colon cancer cells by apoptosis) (Probable). Sclareol can also be used as synthesis precursor of ambergris substitution fragance products such as ambrox (Probable). Terpene synthase that produces 8-hydroxycopalyl diphosphate from geranylgeranyl diphosphate (GGPP) (PubMed:22834731, PubMed:23113661).</text>
</comment>
<comment type="catalytic activity">
    <reaction evidence="4 5">
        <text>(2E,6E,10E)-geranylgeranyl diphosphate + H2O = 8-hydroxycopalyl diphosphate</text>
        <dbReference type="Rhea" id="RHEA:32703"/>
        <dbReference type="ChEBI" id="CHEBI:15377"/>
        <dbReference type="ChEBI" id="CHEBI:58756"/>
        <dbReference type="ChEBI" id="CHEBI:64283"/>
        <dbReference type="EC" id="4.2.1.133"/>
    </reaction>
    <physiologicalReaction direction="left-to-right" evidence="4 5">
        <dbReference type="Rhea" id="RHEA:32704"/>
    </physiologicalReaction>
</comment>
<comment type="pathway">
    <text evidence="4 5 8">Secondary metabolite biosynthesis; terpenoid biosynthesis.</text>
</comment>
<comment type="subcellular location">
    <subcellularLocation>
        <location evidence="4">Plastid</location>
        <location evidence="4">Chloroplast</location>
    </subcellularLocation>
</comment>
<comment type="domain">
    <text evidence="9">The Asp-Xaa-Asp-Asp (DXDD) motif is important for the catalytic activity, presumably through binding to Mg(2+).</text>
</comment>
<comment type="biotechnology">
    <text evidence="5">Escherichia coli expressing SsLPS and SsSCS from Salvia sclarea and CrtE from Pantoea agglomerans can produce sclareol in high-cell-density fermentation conditions, thus being an alternative, sustainable, and cost-efficient route to sclareol and other diterpene analogs.</text>
</comment>
<comment type="biotechnology">
    <text evidence="4">Yeast (S.cerevisiae) engineered to express S.cerevisiae GGPPS and Salvia sclarea LPS and SCS is an efficient way to produce sclareol in a scalable and potentially industrial way.</text>
</comment>
<comment type="similarity">
    <text evidence="9">Belongs to the terpene synthase family.</text>
</comment>
<keyword id="KW-0150">Chloroplast</keyword>
<keyword id="KW-0456">Lyase</keyword>
<keyword id="KW-0460">Magnesium</keyword>
<keyword id="KW-0479">Metal-binding</keyword>
<keyword id="KW-0934">Plastid</keyword>
<keyword id="KW-0809">Transit peptide</keyword>
<gene>
    <name evidence="7" type="primary">LPS</name>
    <name evidence="6" type="synonym">LPPS</name>
    <name evidence="7" type="synonym">TPSSA9</name>
</gene>
<accession>G8GJ96</accession>
<accession>K4HZA9</accession>
<name>CLDS9_SALSC</name>
<reference key="1">
    <citation type="journal article" date="2012" name="BMC Plant Biol.">
        <title>Discovery and functional characterization of two diterpene synthases for sclareol biosynthesis in Salvia sclarea (L.) and their relevance for perfume manufacture.</title>
        <authorList>
            <person name="Caniard A."/>
            <person name="Zerbe P."/>
            <person name="Legrand S."/>
            <person name="Cohade A."/>
            <person name="Valot N."/>
            <person name="Magnard J.L."/>
            <person name="Bohlmann J."/>
            <person name="Legendre L."/>
        </authorList>
    </citation>
    <scope>NUCLEOTIDE SEQUENCE [MRNA]</scope>
    <scope>FUNCTION</scope>
    <scope>SUBCELLULAR LOCATION</scope>
    <scope>CATALYTIC ACTIVITY</scope>
    <scope>PATHWAY</scope>
    <scope>BIOTECHNOLOGY</scope>
    <source>
        <tissue>Sepal</tissue>
    </source>
</reference>
<reference key="2">
    <citation type="journal article" date="2012" name="J. Am. Chem. Soc.">
        <title>Toward a biosynthetic route to sclareol and amber odorants.</title>
        <authorList>
            <person name="Schalk M."/>
            <person name="Pastore L."/>
            <person name="Mirata M.A."/>
            <person name="Khim S."/>
            <person name="Schouwey M."/>
            <person name="Deguerry F."/>
            <person name="Pineda V."/>
            <person name="Rocci L."/>
            <person name="Daviet L."/>
        </authorList>
    </citation>
    <scope>NUCLEOTIDE SEQUENCE [MRNA]</scope>
    <scope>FUNCTION</scope>
    <scope>CATALYTIC ACTIVITY</scope>
    <scope>PATHWAY</scope>
    <scope>BIOTECHNOLOGY</scope>
    <source>
        <tissue>Flower</tissue>
        <tissue>Flower bud</tissue>
        <tissue>Leaf</tissue>
    </source>
</reference>
<reference key="3">
    <citation type="journal article" date="2019" name="Nat. Prod. Rep.">
        <title>Non-volatile natural products in plant glandular trichomes: chemistry, biological activities and biosynthesis.</title>
        <authorList>
            <person name="Liu Y."/>
            <person name="Jing S.-X."/>
            <person name="Luo S.-H."/>
            <person name="Li S.-H."/>
        </authorList>
    </citation>
    <scope>PATHWAY</scope>
    <scope>REVIEW</scope>
</reference>
<feature type="transit peptide" description="Chloroplast" evidence="3">
    <location>
        <begin position="1"/>
        <end status="unknown"/>
    </location>
</feature>
<feature type="chain" id="PRO_0000448858" description="Copal-8-ol diphosphate hydratase TPSSA9, chloroplastic">
    <location>
        <begin status="unknown"/>
        <end position="784"/>
    </location>
</feature>
<feature type="short sequence motif" description="DXDD motif" evidence="9">
    <location>
        <begin position="372"/>
        <end position="375"/>
    </location>
</feature>
<feature type="binding site" evidence="2">
    <location>
        <position position="240"/>
    </location>
    <ligand>
        <name>substrate</name>
    </ligand>
</feature>
<feature type="binding site" evidence="1">
    <location>
        <position position="372"/>
    </location>
    <ligand>
        <name>Mg(2+)</name>
        <dbReference type="ChEBI" id="CHEBI:18420"/>
    </ligand>
</feature>
<feature type="binding site" evidence="1">
    <location>
        <position position="374"/>
    </location>
    <ligand>
        <name>Mg(2+)</name>
        <dbReference type="ChEBI" id="CHEBI:18420"/>
    </ligand>
</feature>
<feature type="binding site" evidence="2">
    <location>
        <position position="459"/>
    </location>
    <ligand>
        <name>substrate</name>
    </ligand>
</feature>
<feature type="sequence conflict" description="In Ref. 1; AFU61897." evidence="9" ref="1">
    <original>Q</original>
    <variation>K</variation>
    <location>
        <position position="238"/>
    </location>
</feature>
<feature type="sequence conflict" description="In Ref. 1; AFU61897." evidence="9" ref="1">
    <original>L</original>
    <variation>F</variation>
    <location>
        <position position="436"/>
    </location>
</feature>
<feature type="sequence conflict" description="In Ref. 1; AFU61897." evidence="9" ref="1">
    <original>Q</original>
    <variation>H</variation>
    <location>
        <position position="538"/>
    </location>
</feature>
<feature type="sequence conflict" description="In Ref. 1; AFU61897." evidence="9" ref="1">
    <original>W</original>
    <variation>L</variation>
    <location>
        <position position="581"/>
    </location>
</feature>
<feature type="sequence conflict" description="In Ref. 1; AFU61897." evidence="9" ref="1">
    <original>I</original>
    <variation>IS</variation>
    <location>
        <position position="615"/>
    </location>
</feature>
<feature type="sequence conflict" description="In Ref. 1; AFU61897." evidence="9" ref="1">
    <original>S</original>
    <variation>F</variation>
    <location>
        <position position="757"/>
    </location>
</feature>
<sequence length="784" mass="89657">MTSVNLSRAPAAIIRRRLQLQPEFHAECSWLKSSSKHAPFTLSCQIRPKQLSQIAELRVTSLDASQASEKDISLVQTPHKVEVNEKIEESIEYVQNLLMTSGDGRISVSPYDTAVIALIKDLKGRDAPQFPSCLEWIAHHQLADGSWGDEFFCIYDRILNTLACVVALKSWNLQSDIIEKGVTYIKENVHKLKGANVEHRTAGFELVVPTFMQMATDLGIQGLPYDHPLIKEIADTKQQRLKEIPKDLVYQMPTNLLYSLEGLGDLEWERLLKLQSGNGSFLTSPSSTAAVLMHTKDEKCLKYIENALKNCDGGAPHTYPVDIFSRLWAIDRLQRLGISRFFQHEIKYFLDHIESVWEETGVFSGRYTKFSDIDDTSMGVRLLKMHGYDVDPNVLKHFKQQDGKFSCYIGQSVESASPMYNLYRAAQLRFPGEEVLEEATKFAFNFLQEMLVKDRLQERWVISDHLFDEIKLGLKMPWYATLPRVEAAYYLDHYAGSGDVWIGKSFYRMPEISNDTYKELAILDFNRCQTQHQLEWIQMQEWYDRCSLSEFGISKRELLRSYFLAAATIFEPERTQERLLWAKTRILSKMITSFVNISGTTLSLDYNFNGLDEIISANEDQGLAGTLLATFHQLLDGFDIYTLHQLKHVWSQWFMKVQQGEGSGGEDAVLLANTLNICAGLNEDVLSNNEYTALSTLTNKICNRLAQIQDNKILQVVDGSIKDKELEQDMQALVKLVLQENGGAVDRNIRHTFLSVSKTFYYDAYHDDETTDLHIFKVLFRPVV</sequence>
<proteinExistence type="evidence at protein level"/>